<gene>
    <name evidence="1" type="primary">nucS</name>
    <name type="ordered locus">TK1898</name>
</gene>
<proteinExistence type="evidence at protein level"/>
<organism>
    <name type="scientific">Thermococcus kodakarensis (strain ATCC BAA-918 / JCM 12380 / KOD1)</name>
    <name type="common">Pyrococcus kodakaraensis (strain KOD1)</name>
    <dbReference type="NCBI Taxonomy" id="69014"/>
    <lineage>
        <taxon>Archaea</taxon>
        <taxon>Methanobacteriati</taxon>
        <taxon>Methanobacteriota</taxon>
        <taxon>Thermococci</taxon>
        <taxon>Thermococcales</taxon>
        <taxon>Thermococcaceae</taxon>
        <taxon>Thermococcus</taxon>
    </lineage>
</organism>
<feature type="chain" id="PRO_0000155698" description="Endonuclease NucS">
    <location>
        <begin position="1"/>
        <end position="252"/>
    </location>
</feature>
<feature type="strand" evidence="2">
    <location>
        <begin position="4"/>
        <end position="11"/>
    </location>
</feature>
<feature type="helix" evidence="2">
    <location>
        <begin position="14"/>
        <end position="27"/>
    </location>
</feature>
<feature type="strand" evidence="2">
    <location>
        <begin position="30"/>
        <end position="58"/>
    </location>
</feature>
<feature type="strand" evidence="2">
    <location>
        <begin position="64"/>
        <end position="67"/>
    </location>
</feature>
<feature type="strand" evidence="2">
    <location>
        <begin position="69"/>
        <end position="73"/>
    </location>
</feature>
<feature type="strand" evidence="2">
    <location>
        <begin position="75"/>
        <end position="78"/>
    </location>
</feature>
<feature type="strand" evidence="2">
    <location>
        <begin position="86"/>
        <end position="94"/>
    </location>
</feature>
<feature type="turn" evidence="2">
    <location>
        <begin position="99"/>
        <end position="102"/>
    </location>
</feature>
<feature type="strand" evidence="2">
    <location>
        <begin position="103"/>
        <end position="118"/>
    </location>
</feature>
<feature type="strand" evidence="2">
    <location>
        <begin position="127"/>
        <end position="130"/>
    </location>
</feature>
<feature type="helix" evidence="2">
    <location>
        <begin position="132"/>
        <end position="141"/>
    </location>
</feature>
<feature type="helix" evidence="2">
    <location>
        <begin position="143"/>
        <end position="145"/>
    </location>
</feature>
<feature type="strand" evidence="2">
    <location>
        <begin position="151"/>
        <end position="158"/>
    </location>
</feature>
<feature type="strand" evidence="2">
    <location>
        <begin position="160"/>
        <end position="169"/>
    </location>
</feature>
<feature type="turn" evidence="4">
    <location>
        <begin position="171"/>
        <end position="173"/>
    </location>
</feature>
<feature type="strand" evidence="2">
    <location>
        <begin position="175"/>
        <end position="180"/>
    </location>
</feature>
<feature type="strand" evidence="3">
    <location>
        <begin position="182"/>
        <end position="185"/>
    </location>
</feature>
<feature type="helix" evidence="2">
    <location>
        <begin position="187"/>
        <end position="204"/>
    </location>
</feature>
<feature type="helix" evidence="2">
    <location>
        <begin position="205"/>
        <end position="207"/>
    </location>
</feature>
<feature type="strand" evidence="2">
    <location>
        <begin position="208"/>
        <end position="215"/>
    </location>
</feature>
<feature type="helix" evidence="2">
    <location>
        <begin position="219"/>
        <end position="227"/>
    </location>
</feature>
<feature type="strand" evidence="2">
    <location>
        <begin position="231"/>
        <end position="234"/>
    </location>
</feature>
<reference key="1">
    <citation type="journal article" date="2005" name="Genome Res.">
        <title>Complete genome sequence of the hyperthermophilic archaeon Thermococcus kodakaraensis KOD1 and comparison with Pyrococcus genomes.</title>
        <authorList>
            <person name="Fukui T."/>
            <person name="Atomi H."/>
            <person name="Kanai T."/>
            <person name="Matsumi R."/>
            <person name="Fujiwara S."/>
            <person name="Imanaka T."/>
        </authorList>
    </citation>
    <scope>NUCLEOTIDE SEQUENCE [LARGE SCALE GENOMIC DNA]</scope>
    <source>
        <strain>ATCC BAA-918 / JCM 12380 / KOD1</strain>
    </source>
</reference>
<comment type="function">
    <text evidence="1">Cleaves both 3' and 5' ssDNA extremities of branched DNA structures.</text>
</comment>
<comment type="subcellular location">
    <subcellularLocation>
        <location evidence="1">Cytoplasm</location>
    </subcellularLocation>
</comment>
<comment type="similarity">
    <text evidence="1">Belongs to the NucS endonuclease family.</text>
</comment>
<keyword id="KW-0002">3D-structure</keyword>
<keyword id="KW-0963">Cytoplasm</keyword>
<keyword id="KW-0238">DNA-binding</keyword>
<keyword id="KW-0255">Endonuclease</keyword>
<keyword id="KW-0378">Hydrolase</keyword>
<keyword id="KW-0540">Nuclease</keyword>
<keyword id="KW-1185">Reference proteome</keyword>
<accession>Q5JER9</accession>
<evidence type="ECO:0000255" key="1">
    <source>
        <dbReference type="HAMAP-Rule" id="MF_00722"/>
    </source>
</evidence>
<evidence type="ECO:0007829" key="2">
    <source>
        <dbReference type="PDB" id="5GKE"/>
    </source>
</evidence>
<evidence type="ECO:0007829" key="3">
    <source>
        <dbReference type="PDB" id="5GKF"/>
    </source>
</evidence>
<evidence type="ECO:0007829" key="4">
    <source>
        <dbReference type="PDB" id="5GKJ"/>
    </source>
</evidence>
<name>NUCS_THEKO</name>
<sequence length="252" mass="28595">MSKDKVTVITSPSTEELVSLVNSALLEEAMLTIFARCKVHYDGRAKSELGSGDRVIIVKPDGSFLIHQSKKREPVNWQPPGSRVRLELRENPVLVSIRRKPRETLEVELEEVYMVSVFRAEDYEELALTGSEAEMAELIFENPEVIEPGFKPLFREKAIGTGIVDVLGRDSDGNIVVLELKRRRAELHAVRQLKSYVEILREEYGDKVRGILVAPSLTSGAKRLLEKEGLEFRKLEPPKRDSKKKGRQKTLF</sequence>
<protein>
    <recommendedName>
        <fullName evidence="1">Endonuclease NucS</fullName>
        <ecNumber evidence="1">3.1.-.-</ecNumber>
    </recommendedName>
</protein>
<dbReference type="EC" id="3.1.-.-" evidence="1"/>
<dbReference type="EMBL" id="AP006878">
    <property type="protein sequence ID" value="BAD86087.1"/>
    <property type="molecule type" value="Genomic_DNA"/>
</dbReference>
<dbReference type="RefSeq" id="WP_011250849.1">
    <property type="nucleotide sequence ID" value="NC_006624.1"/>
</dbReference>
<dbReference type="PDB" id="5GKE">
    <property type="method" value="X-ray"/>
    <property type="resolution" value="2.40 A"/>
    <property type="chains" value="A/B=1-252"/>
</dbReference>
<dbReference type="PDB" id="5GKF">
    <property type="method" value="X-ray"/>
    <property type="resolution" value="2.80 A"/>
    <property type="chains" value="A/B=1-252"/>
</dbReference>
<dbReference type="PDB" id="5GKG">
    <property type="method" value="X-ray"/>
    <property type="resolution" value="2.60 A"/>
    <property type="chains" value="A/B=1-252"/>
</dbReference>
<dbReference type="PDB" id="5GKH">
    <property type="method" value="X-ray"/>
    <property type="resolution" value="2.90 A"/>
    <property type="chains" value="A/B=1-252"/>
</dbReference>
<dbReference type="PDB" id="5GKI">
    <property type="method" value="X-ray"/>
    <property type="resolution" value="2.90 A"/>
    <property type="chains" value="A/B=1-252"/>
</dbReference>
<dbReference type="PDB" id="5GKJ">
    <property type="method" value="X-ray"/>
    <property type="resolution" value="3.20 A"/>
    <property type="chains" value="A/B=1-252"/>
</dbReference>
<dbReference type="PDBsum" id="5GKE"/>
<dbReference type="PDBsum" id="5GKF"/>
<dbReference type="PDBsum" id="5GKG"/>
<dbReference type="PDBsum" id="5GKH"/>
<dbReference type="PDBsum" id="5GKI"/>
<dbReference type="PDBsum" id="5GKJ"/>
<dbReference type="SMR" id="Q5JER9"/>
<dbReference type="STRING" id="69014.TK1898"/>
<dbReference type="EnsemblBacteria" id="BAD86087">
    <property type="protein sequence ID" value="BAD86087"/>
    <property type="gene ID" value="TK1898"/>
</dbReference>
<dbReference type="GeneID" id="78448429"/>
<dbReference type="KEGG" id="tko:TK1898"/>
<dbReference type="PATRIC" id="fig|69014.16.peg.1856"/>
<dbReference type="eggNOG" id="arCOG01304">
    <property type="taxonomic scope" value="Archaea"/>
</dbReference>
<dbReference type="HOGENOM" id="CLU_069350_1_0_2"/>
<dbReference type="InParanoid" id="Q5JER9"/>
<dbReference type="OrthoDB" id="15177at2157"/>
<dbReference type="PhylomeDB" id="Q5JER9"/>
<dbReference type="BRENDA" id="3.1.21.B3">
    <property type="organism ID" value="5246"/>
</dbReference>
<dbReference type="Proteomes" id="UP000000536">
    <property type="component" value="Chromosome"/>
</dbReference>
<dbReference type="GO" id="GO:0005737">
    <property type="term" value="C:cytoplasm"/>
    <property type="evidence" value="ECO:0007669"/>
    <property type="project" value="UniProtKB-SubCell"/>
</dbReference>
<dbReference type="GO" id="GO:0003677">
    <property type="term" value="F:DNA binding"/>
    <property type="evidence" value="ECO:0007669"/>
    <property type="project" value="UniProtKB-KW"/>
</dbReference>
<dbReference type="GO" id="GO:0000014">
    <property type="term" value="F:single-stranded DNA endodeoxyribonuclease activity"/>
    <property type="evidence" value="ECO:0007669"/>
    <property type="project" value="UniProtKB-UniRule"/>
</dbReference>
<dbReference type="CDD" id="cd22341">
    <property type="entry name" value="NucS-like"/>
    <property type="match status" value="1"/>
</dbReference>
<dbReference type="Gene3D" id="2.70.180.20">
    <property type="match status" value="1"/>
</dbReference>
<dbReference type="Gene3D" id="3.40.1350.10">
    <property type="match status" value="1"/>
</dbReference>
<dbReference type="HAMAP" id="MF_00722">
    <property type="entry name" value="NucS"/>
    <property type="match status" value="1"/>
</dbReference>
<dbReference type="InterPro" id="IPR002793">
    <property type="entry name" value="Endonuclease_NucS"/>
</dbReference>
<dbReference type="InterPro" id="IPR048301">
    <property type="entry name" value="NucS_C"/>
</dbReference>
<dbReference type="InterPro" id="IPR048302">
    <property type="entry name" value="NucS_N"/>
</dbReference>
<dbReference type="InterPro" id="IPR049173">
    <property type="entry name" value="NucS_N_sf"/>
</dbReference>
<dbReference type="InterPro" id="IPR011856">
    <property type="entry name" value="tRNA_endonuc-like_dom_sf"/>
</dbReference>
<dbReference type="NCBIfam" id="NF003270">
    <property type="entry name" value="PRK04247.1"/>
    <property type="match status" value="1"/>
</dbReference>
<dbReference type="PANTHER" id="PTHR38814">
    <property type="entry name" value="ENDONUCLEASE NUCS"/>
    <property type="match status" value="1"/>
</dbReference>
<dbReference type="PANTHER" id="PTHR38814:SF1">
    <property type="entry name" value="ENDONUCLEASE NUCS"/>
    <property type="match status" value="1"/>
</dbReference>
<dbReference type="Pfam" id="PF01939">
    <property type="entry name" value="NucS_C"/>
    <property type="match status" value="1"/>
</dbReference>
<dbReference type="Pfam" id="PF21003">
    <property type="entry name" value="NucS_N"/>
    <property type="match status" value="1"/>
</dbReference>